<comment type="subcellular location">
    <subcellularLocation>
        <location>Membrane</location>
        <topology>Single-pass type I membrane protein</topology>
    </subcellularLocation>
</comment>
<proteinExistence type="evidence at protein level"/>
<keyword id="KW-0961">Cell wall biogenesis/degradation</keyword>
<keyword id="KW-0325">Glycoprotein</keyword>
<keyword id="KW-0472">Membrane</keyword>
<keyword id="KW-1185">Reference proteome</keyword>
<keyword id="KW-0732">Signal</keyword>
<keyword id="KW-0812">Transmembrane</keyword>
<keyword id="KW-1133">Transmembrane helix</keyword>
<gene>
    <name type="primary">WSC3</name>
    <name type="ordered locus">YOL105C</name>
    <name type="ORF">HRE556</name>
</gene>
<accession>Q12215</accession>
<accession>D6W1W1</accession>
<accession>Q2VQX5</accession>
<name>WSC3_YEAST</name>
<evidence type="ECO:0000255" key="1"/>
<evidence type="ECO:0000255" key="2">
    <source>
        <dbReference type="PROSITE-ProRule" id="PRU00558"/>
    </source>
</evidence>
<evidence type="ECO:0000256" key="3">
    <source>
        <dbReference type="SAM" id="MobiDB-lite"/>
    </source>
</evidence>
<dbReference type="EMBL" id="Z48149">
    <property type="protein sequence ID" value="CAA88155.1"/>
    <property type="molecule type" value="Genomic_DNA"/>
</dbReference>
<dbReference type="EMBL" id="Z74847">
    <property type="protein sequence ID" value="CAA99123.1"/>
    <property type="molecule type" value="Genomic_DNA"/>
</dbReference>
<dbReference type="EMBL" id="AY899243">
    <property type="protein sequence ID" value="AAX83928.1"/>
    <property type="molecule type" value="mRNA"/>
</dbReference>
<dbReference type="EMBL" id="BK006948">
    <property type="protein sequence ID" value="DAA10677.1"/>
    <property type="molecule type" value="Genomic_DNA"/>
</dbReference>
<dbReference type="PIR" id="S51892">
    <property type="entry name" value="S51892"/>
</dbReference>
<dbReference type="RefSeq" id="NP_014536.1">
    <property type="nucleotide sequence ID" value="NM_001183359.1"/>
</dbReference>
<dbReference type="SMR" id="Q12215"/>
<dbReference type="BioGRID" id="34296">
    <property type="interactions" value="57"/>
</dbReference>
<dbReference type="DIP" id="DIP-1748N"/>
<dbReference type="FunCoup" id="Q12215">
    <property type="interactions" value="193"/>
</dbReference>
<dbReference type="IntAct" id="Q12215">
    <property type="interactions" value="11"/>
</dbReference>
<dbReference type="MINT" id="Q12215"/>
<dbReference type="STRING" id="4932.YOL105C"/>
<dbReference type="GlyCosmos" id="Q12215">
    <property type="glycosylation" value="3 sites, No reported glycans"/>
</dbReference>
<dbReference type="GlyGen" id="Q12215">
    <property type="glycosylation" value="3 sites"/>
</dbReference>
<dbReference type="iPTMnet" id="Q12215"/>
<dbReference type="PaxDb" id="4932-YOL105C"/>
<dbReference type="PeptideAtlas" id="Q12215"/>
<dbReference type="EnsemblFungi" id="YOL105C_mRNA">
    <property type="protein sequence ID" value="YOL105C"/>
    <property type="gene ID" value="YOL105C"/>
</dbReference>
<dbReference type="GeneID" id="854046"/>
<dbReference type="KEGG" id="sce:YOL105C"/>
<dbReference type="AGR" id="SGD:S000005465"/>
<dbReference type="SGD" id="S000005465">
    <property type="gene designation" value="WSC3"/>
</dbReference>
<dbReference type="VEuPathDB" id="FungiDB:YOL105C"/>
<dbReference type="eggNOG" id="KOG4157">
    <property type="taxonomic scope" value="Eukaryota"/>
</dbReference>
<dbReference type="GeneTree" id="ENSGT00940000176584"/>
<dbReference type="HOGENOM" id="CLU_024893_1_0_1"/>
<dbReference type="InParanoid" id="Q12215"/>
<dbReference type="OMA" id="HQETIFV"/>
<dbReference type="OrthoDB" id="2019572at2759"/>
<dbReference type="BioCyc" id="YEAST:G3O-33503-MONOMER"/>
<dbReference type="BioGRID-ORCS" id="854046">
    <property type="hits" value="0 hits in 10 CRISPR screens"/>
</dbReference>
<dbReference type="PRO" id="PR:Q12215"/>
<dbReference type="Proteomes" id="UP000002311">
    <property type="component" value="Chromosome XV"/>
</dbReference>
<dbReference type="RNAct" id="Q12215">
    <property type="molecule type" value="protein"/>
</dbReference>
<dbReference type="GO" id="GO:0000324">
    <property type="term" value="C:fungal-type vacuole"/>
    <property type="evidence" value="ECO:0007005"/>
    <property type="project" value="SGD"/>
</dbReference>
<dbReference type="GO" id="GO:0043332">
    <property type="term" value="C:mating projection tip"/>
    <property type="evidence" value="ECO:0007005"/>
    <property type="project" value="SGD"/>
</dbReference>
<dbReference type="GO" id="GO:0005886">
    <property type="term" value="C:plasma membrane"/>
    <property type="evidence" value="ECO:0000314"/>
    <property type="project" value="SGD"/>
</dbReference>
<dbReference type="GO" id="GO:0004888">
    <property type="term" value="F:transmembrane signaling receptor activity"/>
    <property type="evidence" value="ECO:0000315"/>
    <property type="project" value="SGD"/>
</dbReference>
<dbReference type="GO" id="GO:0071555">
    <property type="term" value="P:cell wall organization"/>
    <property type="evidence" value="ECO:0007669"/>
    <property type="project" value="UniProtKB-KW"/>
</dbReference>
<dbReference type="GO" id="GO:0000425">
    <property type="term" value="P:pexophagy"/>
    <property type="evidence" value="ECO:0000315"/>
    <property type="project" value="SGD"/>
</dbReference>
<dbReference type="GO" id="GO:0009408">
    <property type="term" value="P:response to heat"/>
    <property type="evidence" value="ECO:0000315"/>
    <property type="project" value="SGD"/>
</dbReference>
<dbReference type="GO" id="GO:0007266">
    <property type="term" value="P:Rho protein signal transduction"/>
    <property type="evidence" value="ECO:0000315"/>
    <property type="project" value="SGD"/>
</dbReference>
<dbReference type="InterPro" id="IPR051694">
    <property type="entry name" value="Immunoregulatory_rcpt-like"/>
</dbReference>
<dbReference type="InterPro" id="IPR002889">
    <property type="entry name" value="WSC_carb-bd"/>
</dbReference>
<dbReference type="PANTHER" id="PTHR15549:SF26">
    <property type="entry name" value="AXIAL BUDDING PATTERN PROTEIN 2-RELATED"/>
    <property type="match status" value="1"/>
</dbReference>
<dbReference type="PANTHER" id="PTHR15549">
    <property type="entry name" value="PAIRED IMMUNOGLOBULIN-LIKE TYPE 2 RECEPTOR"/>
    <property type="match status" value="1"/>
</dbReference>
<dbReference type="Pfam" id="PF01822">
    <property type="entry name" value="WSC"/>
    <property type="match status" value="1"/>
</dbReference>
<dbReference type="SMART" id="SM00321">
    <property type="entry name" value="WSC"/>
    <property type="match status" value="1"/>
</dbReference>
<dbReference type="PROSITE" id="PS51212">
    <property type="entry name" value="WSC"/>
    <property type="match status" value="1"/>
</dbReference>
<organism>
    <name type="scientific">Saccharomyces cerevisiae (strain ATCC 204508 / S288c)</name>
    <name type="common">Baker's yeast</name>
    <dbReference type="NCBI Taxonomy" id="559292"/>
    <lineage>
        <taxon>Eukaryota</taxon>
        <taxon>Fungi</taxon>
        <taxon>Dikarya</taxon>
        <taxon>Ascomycota</taxon>
        <taxon>Saccharomycotina</taxon>
        <taxon>Saccharomycetes</taxon>
        <taxon>Saccharomycetales</taxon>
        <taxon>Saccharomycetaceae</taxon>
        <taxon>Saccharomyces</taxon>
    </lineage>
</organism>
<reference key="1">
    <citation type="journal article" date="1995" name="Yeast">
        <title>Sequence analysis of a 44 kb DNA fragment of yeast chromosome XV including the Ty1-H3 retrotransposon, the suf1(+) frameshift suppressor gene for tRNA-Gly, the yeast transfer RNA-Thr-1a and a delta element.</title>
        <authorList>
            <person name="Vandenbol M."/>
            <person name="Durand P."/>
            <person name="Portetelle D."/>
            <person name="Hilger F."/>
        </authorList>
    </citation>
    <scope>NUCLEOTIDE SEQUENCE [GENOMIC DNA]</scope>
</reference>
<reference key="2">
    <citation type="journal article" date="1997" name="Nature">
        <title>The nucleotide sequence of Saccharomyces cerevisiae chromosome XV.</title>
        <authorList>
            <person name="Dujon B."/>
            <person name="Albermann K."/>
            <person name="Aldea M."/>
            <person name="Alexandraki D."/>
            <person name="Ansorge W."/>
            <person name="Arino J."/>
            <person name="Benes V."/>
            <person name="Bohn C."/>
            <person name="Bolotin-Fukuhara M."/>
            <person name="Bordonne R."/>
            <person name="Boyer J."/>
            <person name="Camasses A."/>
            <person name="Casamayor A."/>
            <person name="Casas C."/>
            <person name="Cheret G."/>
            <person name="Cziepluch C."/>
            <person name="Daignan-Fornier B."/>
            <person name="Dang V.-D."/>
            <person name="de Haan M."/>
            <person name="Delius H."/>
            <person name="Durand P."/>
            <person name="Fairhead C."/>
            <person name="Feldmann H."/>
            <person name="Gaillon L."/>
            <person name="Galisson F."/>
            <person name="Gamo F.-J."/>
            <person name="Gancedo C."/>
            <person name="Goffeau A."/>
            <person name="Goulding S.E."/>
            <person name="Grivell L.A."/>
            <person name="Habbig B."/>
            <person name="Hand N.J."/>
            <person name="Hani J."/>
            <person name="Hattenhorst U."/>
            <person name="Hebling U."/>
            <person name="Hernando Y."/>
            <person name="Herrero E."/>
            <person name="Heumann K."/>
            <person name="Hiesel R."/>
            <person name="Hilger F."/>
            <person name="Hofmann B."/>
            <person name="Hollenberg C.P."/>
            <person name="Hughes B."/>
            <person name="Jauniaux J.-C."/>
            <person name="Kalogeropoulos A."/>
            <person name="Katsoulou C."/>
            <person name="Kordes E."/>
            <person name="Lafuente M.J."/>
            <person name="Landt O."/>
            <person name="Louis E.J."/>
            <person name="Maarse A.C."/>
            <person name="Madania A."/>
            <person name="Mannhaupt G."/>
            <person name="Marck C."/>
            <person name="Martin R.P."/>
            <person name="Mewes H.-W."/>
            <person name="Michaux G."/>
            <person name="Paces V."/>
            <person name="Parle-McDermott A.G."/>
            <person name="Pearson B.M."/>
            <person name="Perrin A."/>
            <person name="Pettersson B."/>
            <person name="Poch O."/>
            <person name="Pohl T.M."/>
            <person name="Poirey R."/>
            <person name="Portetelle D."/>
            <person name="Pujol A."/>
            <person name="Purnelle B."/>
            <person name="Ramezani Rad M."/>
            <person name="Rechmann S."/>
            <person name="Schwager C."/>
            <person name="Schweizer M."/>
            <person name="Sor F."/>
            <person name="Sterky F."/>
            <person name="Tarassov I.A."/>
            <person name="Teodoru C."/>
            <person name="Tettelin H."/>
            <person name="Thierry A."/>
            <person name="Tobiasch E."/>
            <person name="Tzermia M."/>
            <person name="Uhlen M."/>
            <person name="Unseld M."/>
            <person name="Valens M."/>
            <person name="Vandenbol M."/>
            <person name="Vetter I."/>
            <person name="Vlcek C."/>
            <person name="Voet M."/>
            <person name="Volckaert G."/>
            <person name="Voss H."/>
            <person name="Wambutt R."/>
            <person name="Wedler H."/>
            <person name="Wiemann S."/>
            <person name="Winsor B."/>
            <person name="Wolfe K.H."/>
            <person name="Zollner A."/>
            <person name="Zumstein E."/>
            <person name="Kleine K."/>
        </authorList>
    </citation>
    <scope>NUCLEOTIDE SEQUENCE [LARGE SCALE GENOMIC DNA]</scope>
    <source>
        <strain>ATCC 204508 / S288c</strain>
    </source>
</reference>
<reference key="3">
    <citation type="journal article" date="2014" name="G3 (Bethesda)">
        <title>The reference genome sequence of Saccharomyces cerevisiae: Then and now.</title>
        <authorList>
            <person name="Engel S.R."/>
            <person name="Dietrich F.S."/>
            <person name="Fisk D.G."/>
            <person name="Binkley G."/>
            <person name="Balakrishnan R."/>
            <person name="Costanzo M.C."/>
            <person name="Dwight S.S."/>
            <person name="Hitz B.C."/>
            <person name="Karra K."/>
            <person name="Nash R.S."/>
            <person name="Weng S."/>
            <person name="Wong E.D."/>
            <person name="Lloyd P."/>
            <person name="Skrzypek M.S."/>
            <person name="Miyasato S.R."/>
            <person name="Simison M."/>
            <person name="Cherry J.M."/>
        </authorList>
    </citation>
    <scope>GENOME REANNOTATION</scope>
    <source>
        <strain>ATCC 204508 / S288c</strain>
    </source>
</reference>
<reference key="4">
    <citation type="journal article" date="2005" name="Nucleic Acids Res.">
        <title>Mapping of transcription start sites in Saccharomyces cerevisiae using 5' SAGE.</title>
        <authorList>
            <person name="Zhang Z."/>
            <person name="Dietrich F.S."/>
        </authorList>
    </citation>
    <scope>NUCLEOTIDE SEQUENCE [MRNA] OF 1-80</scope>
    <source>
        <strain>ATCC 208353 / W303-1A</strain>
    </source>
</reference>
<reference key="5">
    <citation type="journal article" date="2006" name="Proc. Natl. Acad. Sci. U.S.A.">
        <title>A global topology map of the Saccharomyces cerevisiae membrane proteome.</title>
        <authorList>
            <person name="Kim H."/>
            <person name="Melen K."/>
            <person name="Oesterberg M."/>
            <person name="von Heijne G."/>
        </authorList>
    </citation>
    <scope>TOPOLOGY [LARGE SCALE ANALYSIS]</scope>
    <source>
        <strain>ATCC 208353 / W303-1A</strain>
    </source>
</reference>
<feature type="signal peptide" evidence="1">
    <location>
        <begin position="1"/>
        <end position="38"/>
    </location>
</feature>
<feature type="chain" id="PRO_0000041485" description="Cell wall integrity and stress response component 3">
    <location>
        <begin position="39"/>
        <end position="556"/>
    </location>
</feature>
<feature type="topological domain" description="Extracellular" evidence="1">
    <location>
        <begin position="39"/>
        <end position="384"/>
    </location>
</feature>
<feature type="transmembrane region" description="Helical" evidence="1">
    <location>
        <begin position="385"/>
        <end position="405"/>
    </location>
</feature>
<feature type="topological domain" description="Cytoplasmic" evidence="1">
    <location>
        <begin position="406"/>
        <end position="556"/>
    </location>
</feature>
<feature type="domain" description="WSC" evidence="2">
    <location>
        <begin position="39"/>
        <end position="132"/>
    </location>
</feature>
<feature type="region of interest" description="Disordered" evidence="3">
    <location>
        <begin position="142"/>
        <end position="257"/>
    </location>
</feature>
<feature type="region of interest" description="Disordered" evidence="3">
    <location>
        <begin position="269"/>
        <end position="312"/>
    </location>
</feature>
<feature type="region of interest" description="Disordered" evidence="3">
    <location>
        <begin position="425"/>
        <end position="444"/>
    </location>
</feature>
<feature type="region of interest" description="Disordered" evidence="3">
    <location>
        <begin position="534"/>
        <end position="556"/>
    </location>
</feature>
<feature type="compositionally biased region" description="Low complexity" evidence="3">
    <location>
        <begin position="142"/>
        <end position="169"/>
    </location>
</feature>
<feature type="compositionally biased region" description="Low complexity" evidence="3">
    <location>
        <begin position="184"/>
        <end position="257"/>
    </location>
</feature>
<feature type="compositionally biased region" description="Polar residues" evidence="3">
    <location>
        <begin position="546"/>
        <end position="556"/>
    </location>
</feature>
<feature type="glycosylation site" description="N-linked (GlcNAc...) asparagine" evidence="1">
    <location>
        <position position="84"/>
    </location>
</feature>
<feature type="glycosylation site" description="N-linked (GlcNAc...) asparagine" evidence="1">
    <location>
        <position position="367"/>
    </location>
</feature>
<feature type="glycosylation site" description="N-linked (GlcNAc...) asparagine" evidence="1">
    <location>
        <position position="370"/>
    </location>
</feature>
<protein>
    <recommendedName>
        <fullName>Cell wall integrity and stress response component 3</fullName>
    </recommendedName>
</protein>
<sequence length="556" mass="58230">MERVWFAKLTNKGTIKIGYISFILLSLLCQSLIGLVNADFNYEGCYSAADIQSAGLSLKNSYIYQSVSYCQNQCPESAVVALFNGSDCYCGNSVSFLTSLTKSTDSNCGTKCSGWPYQMCGGSSYMNVYVNAETFVSSVESSSSKEGSSTSYMPSTTSSLSSAQISSTTRRTSTDMKSSEMIATTVSTTSTTSSSTSSTTSSTTSSTTSSTTSSTTSSSTSSTTSSTTSSTTSSTTSSTTSSTTSSTTSSTTSSTTSIFSVTSSSSSITLSSSEHTTVDSRTSSPSSTLVPVSSSSSTLSTPKVTSMTPSTSSTIPIVTSVELVTSVVTKAIVSTSDQHQETIFVTRTSVVERSSEVATATAAASNNRSNSTSKQRLSGGAIAGIVIGVVFGVIFIILILLFLIWRRRKSHDQLDLEETKHYQPYSFGDEDANPIGPPPSSGTTNWMRHSRGNTAGSIGTSNMYGFSMSNGANYSSPSSNTSGSIINNLAGLQDATVQKQNLPSTVFEEANTLNSANERFSANSLPDMMMSGPLQVVNPDNPDNPELSSTVSHNRA</sequence>